<reference key="1">
    <citation type="journal article" date="1990" name="Curr. Eye Res.">
        <title>Molecular cloning and complete nucleotide sequence of the cDNA encoding a bovine lens intrinsic membrane protein (MP19).</title>
        <authorList>
            <person name="Gutekunst K.A."/>
            <person name="Rao G.N."/>
            <person name="Church R.L."/>
        </authorList>
    </citation>
    <scope>NUCLEOTIDE SEQUENCE [MRNA]</scope>
</reference>
<reference key="2">
    <citation type="journal article" date="1989" name="FEBS Lett.">
        <title>Bovine lens 23, 21 and 19 kDa intrinsic membrane proteins have an identical amino-terminal amino acid sequence.</title>
        <authorList>
            <person name="Rao G.N."/>
            <person name="Gutekunst K.A."/>
            <person name="Church R.L."/>
        </authorList>
    </citation>
    <scope>PROTEIN SEQUENCE OF 1-20</scope>
    <source>
        <tissue>Lens</tissue>
    </source>
</reference>
<reference key="3">
    <citation type="journal article" date="1989" name="J. Biol. Chem.">
        <title>Identification of an 18,000-dalton protein in mammalian lens fiber cell membranes.</title>
        <authorList>
            <person name="Louis C.F."/>
            <person name="Hur K.C."/>
            <person name="Galvan A.C."/>
            <person name="Tenbroek E.M."/>
            <person name="Jarvis L.J."/>
            <person name="Eccleston E.D."/>
            <person name="Howard J.B."/>
        </authorList>
    </citation>
    <scope>PROTEIN SEQUENCE OF 1-23</scope>
    <source>
        <tissue>Lens</tissue>
    </source>
</reference>
<reference key="4">
    <citation type="journal article" date="2005" name="Invest. Ophthalmol. Vis. Sci.">
        <title>Phosphorylation and glycosylation of bovine lens MP20.</title>
        <authorList>
            <person name="Ervin L.A."/>
            <person name="Ball L.E."/>
            <person name="Crouch R.K."/>
            <person name="Schey K.L."/>
        </authorList>
    </citation>
    <scope>PHOSPHORYLATION AT SER-170 AND THR-171</scope>
    <scope>GLYCOSYLATION AT TRP-43 AND TRP-61</scope>
    <scope>LACK OF GLYCOSYLATION AT ASN-62 AND TRP-134</scope>
</reference>
<feature type="chain" id="PRO_0000164663" description="Lens fiber membrane intrinsic protein">
    <location>
        <begin position="1"/>
        <end position="173"/>
    </location>
</feature>
<feature type="topological domain" description="Cytoplasmic" evidence="1">
    <location>
        <begin position="1"/>
        <end position="3"/>
    </location>
</feature>
<feature type="transmembrane region" description="Helical" evidence="1">
    <location>
        <begin position="4"/>
        <end position="24"/>
    </location>
</feature>
<feature type="topological domain" description="Extracellular" evidence="1">
    <location>
        <begin position="25"/>
        <end position="66"/>
    </location>
</feature>
<feature type="transmembrane region" description="Helical" evidence="1">
    <location>
        <begin position="67"/>
        <end position="87"/>
    </location>
</feature>
<feature type="topological domain" description="Cytoplasmic" evidence="1">
    <location>
        <begin position="88"/>
        <end position="98"/>
    </location>
</feature>
<feature type="transmembrane region" description="Helical" evidence="1">
    <location>
        <begin position="99"/>
        <end position="119"/>
    </location>
</feature>
<feature type="topological domain" description="Extracellular" evidence="1">
    <location>
        <begin position="120"/>
        <end position="140"/>
    </location>
</feature>
<feature type="transmembrane region" description="Helical" evidence="1">
    <location>
        <begin position="141"/>
        <end position="161"/>
    </location>
</feature>
<feature type="topological domain" description="Cytoplasmic">
    <location>
        <begin position="162"/>
        <end position="173"/>
    </location>
</feature>
<feature type="site" description="Not glycosylated" evidence="2">
    <location>
        <position position="62"/>
    </location>
</feature>
<feature type="site" description="Not glycosylated" evidence="2">
    <location>
        <position position="134"/>
    </location>
</feature>
<feature type="modified residue" description="Phosphoserine" evidence="2">
    <location>
        <position position="170"/>
    </location>
</feature>
<feature type="modified residue" description="Phosphothreonine" evidence="2">
    <location>
        <position position="171"/>
    </location>
</feature>
<feature type="glycosylation site" description="C-linked (Man) tryptophan; partial" evidence="2">
    <location>
        <position position="43"/>
    </location>
</feature>
<feature type="glycosylation site" description="C-linked (Man) tryptophan; partial" evidence="2">
    <location>
        <position position="61"/>
    </location>
</feature>
<accession>P20274</accession>
<keyword id="KW-0903">Direct protein sequencing</keyword>
<keyword id="KW-1015">Disulfide bond</keyword>
<keyword id="KW-0273">Eye lens protein</keyword>
<keyword id="KW-0325">Glycoprotein</keyword>
<keyword id="KW-0472">Membrane</keyword>
<keyword id="KW-0597">Phosphoprotein</keyword>
<keyword id="KW-1185">Reference proteome</keyword>
<keyword id="KW-0812">Transmembrane</keyword>
<keyword id="KW-1133">Transmembrane helix</keyword>
<sequence>MYSFMGGGLFCAWVGTILLVVATATDHWMQYRLSGAFAHQGLWRYCLGTKCYLQTESIAYWNATRAFMILSSLCATSGIIMGIVAFAQQPTFTRLSRPFSAGIMFFASTFFVLLALAIYTGVTVSFLGRRFGDWRFSWSYILGWVALLMTFFAGIFYMCAYRMHECRRLSTPR</sequence>
<name>LMIP_BOVIN</name>
<gene>
    <name type="primary">LIM2</name>
</gene>
<dbReference type="EMBL" id="L04188">
    <property type="protein sequence ID" value="AAA30621.1"/>
    <property type="molecule type" value="mRNA"/>
</dbReference>
<dbReference type="PIR" id="A48300">
    <property type="entry name" value="A48300"/>
</dbReference>
<dbReference type="RefSeq" id="NP_776527.1">
    <property type="nucleotide sequence ID" value="NM_174102.2"/>
</dbReference>
<dbReference type="SMR" id="P20274"/>
<dbReference type="FunCoup" id="P20274">
    <property type="interactions" value="27"/>
</dbReference>
<dbReference type="STRING" id="9913.ENSBTAP00000004191"/>
<dbReference type="GlyCosmos" id="P20274">
    <property type="glycosylation" value="2 sites, No reported glycans"/>
</dbReference>
<dbReference type="GlyGen" id="P20274">
    <property type="glycosylation" value="2 sites"/>
</dbReference>
<dbReference type="iPTMnet" id="P20274"/>
<dbReference type="SwissPalm" id="P20274"/>
<dbReference type="PaxDb" id="9913-ENSBTAP00000004191"/>
<dbReference type="Ensembl" id="ENSBTAT00000004191.4">
    <property type="protein sequence ID" value="ENSBTAP00000004191.3"/>
    <property type="gene ID" value="ENSBTAG00000003231.4"/>
</dbReference>
<dbReference type="GeneID" id="281282"/>
<dbReference type="KEGG" id="bta:281282"/>
<dbReference type="CTD" id="3982"/>
<dbReference type="VEuPathDB" id="HostDB:ENSBTAG00000003231"/>
<dbReference type="VGNC" id="VGNC:30885">
    <property type="gene designation" value="LIM2"/>
</dbReference>
<dbReference type="eggNOG" id="ENOG502QSWZ">
    <property type="taxonomic scope" value="Eukaryota"/>
</dbReference>
<dbReference type="GeneTree" id="ENSGT01050000244814"/>
<dbReference type="HOGENOM" id="CLU_113769_0_0_1"/>
<dbReference type="InParanoid" id="P20274"/>
<dbReference type="OMA" id="KCYMQTE"/>
<dbReference type="OrthoDB" id="6137544at2759"/>
<dbReference type="TreeFam" id="TF330587"/>
<dbReference type="Proteomes" id="UP000009136">
    <property type="component" value="Chromosome 18"/>
</dbReference>
<dbReference type="Bgee" id="ENSBTAG00000003231">
    <property type="expression patterns" value="Expressed in pigment epithelium of eye and 28 other cell types or tissues"/>
</dbReference>
<dbReference type="GO" id="GO:0005886">
    <property type="term" value="C:plasma membrane"/>
    <property type="evidence" value="ECO:0000318"/>
    <property type="project" value="GO_Central"/>
</dbReference>
<dbReference type="GO" id="GO:0005212">
    <property type="term" value="F:structural constituent of eye lens"/>
    <property type="evidence" value="ECO:0007669"/>
    <property type="project" value="UniProtKB-KW"/>
</dbReference>
<dbReference type="GO" id="GO:0002088">
    <property type="term" value="P:lens development in camera-type eye"/>
    <property type="evidence" value="ECO:0007669"/>
    <property type="project" value="Ensembl"/>
</dbReference>
<dbReference type="FunFam" id="1.20.140.150:FF:000013">
    <property type="entry name" value="lens fiber membrane intrinsic protein-like"/>
    <property type="match status" value="1"/>
</dbReference>
<dbReference type="Gene3D" id="1.20.140.150">
    <property type="match status" value="1"/>
</dbReference>
<dbReference type="InterPro" id="IPR003935">
    <property type="entry name" value="LMIP"/>
</dbReference>
<dbReference type="InterPro" id="IPR050579">
    <property type="entry name" value="PMP-22/EMP/MP20-like"/>
</dbReference>
<dbReference type="InterPro" id="IPR004031">
    <property type="entry name" value="PMP22/EMP/MP20/Claudin"/>
</dbReference>
<dbReference type="InterPro" id="IPR004032">
    <property type="entry name" value="PMP22_EMP_MP20"/>
</dbReference>
<dbReference type="PANTHER" id="PTHR10671">
    <property type="entry name" value="EPITHELIAL MEMBRANE PROTEIN-RELATED"/>
    <property type="match status" value="1"/>
</dbReference>
<dbReference type="PANTHER" id="PTHR10671:SF9">
    <property type="entry name" value="LENS FIBER MEMBRANE INTRINSIC PROTEIN"/>
    <property type="match status" value="1"/>
</dbReference>
<dbReference type="Pfam" id="PF00822">
    <property type="entry name" value="PMP22_Claudin"/>
    <property type="match status" value="1"/>
</dbReference>
<dbReference type="PRINTS" id="PR01453">
    <property type="entry name" value="EPMEMFAMILY"/>
</dbReference>
<dbReference type="PRINTS" id="PR01457">
    <property type="entry name" value="LENSMEMPROT"/>
</dbReference>
<dbReference type="PROSITE" id="PS01221">
    <property type="entry name" value="PMP22_1"/>
    <property type="match status" value="1"/>
</dbReference>
<dbReference type="PROSITE" id="PS01222">
    <property type="entry name" value="PMP22_2"/>
    <property type="match status" value="1"/>
</dbReference>
<protein>
    <recommendedName>
        <fullName>Lens fiber membrane intrinsic protein</fullName>
    </recommendedName>
    <alternativeName>
        <fullName>MP18</fullName>
    </alternativeName>
    <alternativeName>
        <fullName>MP19</fullName>
    </alternativeName>
    <alternativeName>
        <fullName>MP20</fullName>
    </alternativeName>
    <alternativeName>
        <fullName>MP21</fullName>
    </alternativeName>
    <alternativeName>
        <fullName>MP23</fullName>
    </alternativeName>
</protein>
<evidence type="ECO:0000255" key="1"/>
<evidence type="ECO:0000269" key="2">
    <source>
    </source>
</evidence>
<evidence type="ECO:0000305" key="3"/>
<comment type="function">
    <text>Present in the thicker 16-17 nm junctions of mammalian lens fiber cells, where it may contribute to cell junctional organization. Acts as a receptor for calmodulin. May play an important role in both lens development and cataractogenesis.</text>
</comment>
<comment type="subunit">
    <text>Seems to be associated with itself or another lens membrane component via disulfide bonds.</text>
</comment>
<comment type="subcellular location">
    <subcellularLocation>
        <location>Membrane</location>
        <topology>Multi-pass membrane protein</topology>
    </subcellularLocation>
</comment>
<comment type="tissue specificity">
    <text>Eye lens specific.</text>
</comment>
<comment type="developmental stage">
    <text>Higher expression in lenses from pre-natal (1-5 months gestation) than those from postnatal (4-6 months) calves.</text>
</comment>
<comment type="PTM">
    <text>Predominantly monophosphorylated on Ser-170. Only about 15% diphosphorylated on both Ser-170 and Thr-171.</text>
</comment>
<comment type="PTM">
    <text evidence="2">C-glycosylated. Trp-43 is more extensively C-glycosylated than Trp-61. C-glycosylation may be involved in membrane trafficking.</text>
</comment>
<comment type="similarity">
    <text evidence="3">Belongs to the PMP-22/EMP/MP20 family.</text>
</comment>
<proteinExistence type="evidence at protein level"/>
<organism>
    <name type="scientific">Bos taurus</name>
    <name type="common">Bovine</name>
    <dbReference type="NCBI Taxonomy" id="9913"/>
    <lineage>
        <taxon>Eukaryota</taxon>
        <taxon>Metazoa</taxon>
        <taxon>Chordata</taxon>
        <taxon>Craniata</taxon>
        <taxon>Vertebrata</taxon>
        <taxon>Euteleostomi</taxon>
        <taxon>Mammalia</taxon>
        <taxon>Eutheria</taxon>
        <taxon>Laurasiatheria</taxon>
        <taxon>Artiodactyla</taxon>
        <taxon>Ruminantia</taxon>
        <taxon>Pecora</taxon>
        <taxon>Bovidae</taxon>
        <taxon>Bovinae</taxon>
        <taxon>Bos</taxon>
    </lineage>
</organism>